<dbReference type="EC" id="2.7.4.22" evidence="1"/>
<dbReference type="EMBL" id="CR628337">
    <property type="protein sequence ID" value="CAH15911.1"/>
    <property type="molecule type" value="Genomic_DNA"/>
</dbReference>
<dbReference type="RefSeq" id="WP_011215690.1">
    <property type="nucleotide sequence ID" value="NC_006369.1"/>
</dbReference>
<dbReference type="SMR" id="Q5WVY9"/>
<dbReference type="KEGG" id="lpf:lpl1671"/>
<dbReference type="LegioList" id="lpl1671"/>
<dbReference type="HOGENOM" id="CLU_033861_0_0_6"/>
<dbReference type="UniPathway" id="UPA00159">
    <property type="reaction ID" value="UER00275"/>
</dbReference>
<dbReference type="Proteomes" id="UP000002517">
    <property type="component" value="Chromosome"/>
</dbReference>
<dbReference type="GO" id="GO:0005829">
    <property type="term" value="C:cytosol"/>
    <property type="evidence" value="ECO:0007669"/>
    <property type="project" value="TreeGrafter"/>
</dbReference>
<dbReference type="GO" id="GO:0005524">
    <property type="term" value="F:ATP binding"/>
    <property type="evidence" value="ECO:0007669"/>
    <property type="project" value="UniProtKB-KW"/>
</dbReference>
<dbReference type="GO" id="GO:0033862">
    <property type="term" value="F:UMP kinase activity"/>
    <property type="evidence" value="ECO:0007669"/>
    <property type="project" value="UniProtKB-EC"/>
</dbReference>
<dbReference type="GO" id="GO:0044210">
    <property type="term" value="P:'de novo' CTP biosynthetic process"/>
    <property type="evidence" value="ECO:0007669"/>
    <property type="project" value="UniProtKB-UniRule"/>
</dbReference>
<dbReference type="GO" id="GO:0006225">
    <property type="term" value="P:UDP biosynthetic process"/>
    <property type="evidence" value="ECO:0007669"/>
    <property type="project" value="TreeGrafter"/>
</dbReference>
<dbReference type="CDD" id="cd04254">
    <property type="entry name" value="AAK_UMPK-PyrH-Ec"/>
    <property type="match status" value="1"/>
</dbReference>
<dbReference type="FunFam" id="3.40.1160.10:FF:000001">
    <property type="entry name" value="Uridylate kinase"/>
    <property type="match status" value="1"/>
</dbReference>
<dbReference type="Gene3D" id="3.40.1160.10">
    <property type="entry name" value="Acetylglutamate kinase-like"/>
    <property type="match status" value="1"/>
</dbReference>
<dbReference type="HAMAP" id="MF_01220_B">
    <property type="entry name" value="PyrH_B"/>
    <property type="match status" value="1"/>
</dbReference>
<dbReference type="InterPro" id="IPR036393">
    <property type="entry name" value="AceGlu_kinase-like_sf"/>
</dbReference>
<dbReference type="InterPro" id="IPR001048">
    <property type="entry name" value="Asp/Glu/Uridylate_kinase"/>
</dbReference>
<dbReference type="InterPro" id="IPR011817">
    <property type="entry name" value="Uridylate_kinase"/>
</dbReference>
<dbReference type="InterPro" id="IPR015963">
    <property type="entry name" value="Uridylate_kinase_bac"/>
</dbReference>
<dbReference type="NCBIfam" id="TIGR02075">
    <property type="entry name" value="pyrH_bact"/>
    <property type="match status" value="1"/>
</dbReference>
<dbReference type="PANTHER" id="PTHR42833">
    <property type="entry name" value="URIDYLATE KINASE"/>
    <property type="match status" value="1"/>
</dbReference>
<dbReference type="PANTHER" id="PTHR42833:SF4">
    <property type="entry name" value="URIDYLATE KINASE PUMPKIN, CHLOROPLASTIC"/>
    <property type="match status" value="1"/>
</dbReference>
<dbReference type="Pfam" id="PF00696">
    <property type="entry name" value="AA_kinase"/>
    <property type="match status" value="1"/>
</dbReference>
<dbReference type="PIRSF" id="PIRSF005650">
    <property type="entry name" value="Uridylate_kin"/>
    <property type="match status" value="1"/>
</dbReference>
<dbReference type="SUPFAM" id="SSF53633">
    <property type="entry name" value="Carbamate kinase-like"/>
    <property type="match status" value="1"/>
</dbReference>
<protein>
    <recommendedName>
        <fullName evidence="1">Uridylate kinase</fullName>
        <shortName evidence="1">UK</shortName>
        <ecNumber evidence="1">2.7.4.22</ecNumber>
    </recommendedName>
    <alternativeName>
        <fullName evidence="1">Uridine monophosphate kinase</fullName>
        <shortName evidence="1">UMP kinase</shortName>
        <shortName evidence="1">UMPK</shortName>
    </alternativeName>
</protein>
<name>PYRH_LEGPL</name>
<comment type="function">
    <text evidence="1">Catalyzes the reversible phosphorylation of UMP to UDP.</text>
</comment>
<comment type="catalytic activity">
    <reaction evidence="1">
        <text>UMP + ATP = UDP + ADP</text>
        <dbReference type="Rhea" id="RHEA:24400"/>
        <dbReference type="ChEBI" id="CHEBI:30616"/>
        <dbReference type="ChEBI" id="CHEBI:57865"/>
        <dbReference type="ChEBI" id="CHEBI:58223"/>
        <dbReference type="ChEBI" id="CHEBI:456216"/>
        <dbReference type="EC" id="2.7.4.22"/>
    </reaction>
</comment>
<comment type="activity regulation">
    <text evidence="1">Inhibited by UTP.</text>
</comment>
<comment type="pathway">
    <text evidence="1">Pyrimidine metabolism; CTP biosynthesis via de novo pathway; UDP from UMP (UMPK route): step 1/1.</text>
</comment>
<comment type="subunit">
    <text evidence="1">Homohexamer.</text>
</comment>
<comment type="subcellular location">
    <subcellularLocation>
        <location evidence="1">Cytoplasm</location>
    </subcellularLocation>
</comment>
<comment type="similarity">
    <text evidence="1">Belongs to the UMP kinase family.</text>
</comment>
<evidence type="ECO:0000255" key="1">
    <source>
        <dbReference type="HAMAP-Rule" id="MF_01220"/>
    </source>
</evidence>
<organism>
    <name type="scientific">Legionella pneumophila (strain Lens)</name>
    <dbReference type="NCBI Taxonomy" id="297245"/>
    <lineage>
        <taxon>Bacteria</taxon>
        <taxon>Pseudomonadati</taxon>
        <taxon>Pseudomonadota</taxon>
        <taxon>Gammaproteobacteria</taxon>
        <taxon>Legionellales</taxon>
        <taxon>Legionellaceae</taxon>
        <taxon>Legionella</taxon>
    </lineage>
</organism>
<keyword id="KW-0067">ATP-binding</keyword>
<keyword id="KW-0963">Cytoplasm</keyword>
<keyword id="KW-0418">Kinase</keyword>
<keyword id="KW-0547">Nucleotide-binding</keyword>
<keyword id="KW-0665">Pyrimidine biosynthesis</keyword>
<keyword id="KW-0808">Transferase</keyword>
<accession>Q5WVY9</accession>
<feature type="chain" id="PRO_0000323871" description="Uridylate kinase">
    <location>
        <begin position="1"/>
        <end position="247"/>
    </location>
</feature>
<feature type="binding site" evidence="1">
    <location>
        <begin position="17"/>
        <end position="20"/>
    </location>
    <ligand>
        <name>ATP</name>
        <dbReference type="ChEBI" id="CHEBI:30616"/>
    </ligand>
</feature>
<feature type="binding site" evidence="1">
    <location>
        <position position="59"/>
    </location>
    <ligand>
        <name>UMP</name>
        <dbReference type="ChEBI" id="CHEBI:57865"/>
    </ligand>
</feature>
<feature type="binding site" evidence="1">
    <location>
        <position position="60"/>
    </location>
    <ligand>
        <name>ATP</name>
        <dbReference type="ChEBI" id="CHEBI:30616"/>
    </ligand>
</feature>
<feature type="binding site" evidence="1">
    <location>
        <position position="64"/>
    </location>
    <ligand>
        <name>ATP</name>
        <dbReference type="ChEBI" id="CHEBI:30616"/>
    </ligand>
</feature>
<feature type="binding site" evidence="1">
    <location>
        <position position="79"/>
    </location>
    <ligand>
        <name>UMP</name>
        <dbReference type="ChEBI" id="CHEBI:57865"/>
    </ligand>
</feature>
<feature type="binding site" evidence="1">
    <location>
        <begin position="140"/>
        <end position="147"/>
    </location>
    <ligand>
        <name>UMP</name>
        <dbReference type="ChEBI" id="CHEBI:57865"/>
    </ligand>
</feature>
<feature type="binding site" evidence="1">
    <location>
        <position position="167"/>
    </location>
    <ligand>
        <name>ATP</name>
        <dbReference type="ChEBI" id="CHEBI:30616"/>
    </ligand>
</feature>
<feature type="binding site" evidence="1">
    <location>
        <position position="173"/>
    </location>
    <ligand>
        <name>ATP</name>
        <dbReference type="ChEBI" id="CHEBI:30616"/>
    </ligand>
</feature>
<feature type="binding site" evidence="1">
    <location>
        <position position="176"/>
    </location>
    <ligand>
        <name>ATP</name>
        <dbReference type="ChEBI" id="CHEBI:30616"/>
    </ligand>
</feature>
<gene>
    <name evidence="1" type="primary">pyrH</name>
    <name type="ordered locus">lpl1671</name>
</gene>
<sequence>MMNESQPKLKYKRILLKFSGEALMGKSQFGIDPSVLDSLARDIAELIHMGVEVGLVLGGGNLFRGKALSQAGVGRVTGDHMGMLATVMNALALRDALERIDLPARIMSAIPMLGVVDPYHRRKAITHLRNGQVVIFAAGTGNPFFTTDTAACLRAIEIGADIVLKATKVDGVYSADPLKNPDAKRYDYLTYKEVLTKGLEVMDSTAICLCQDQGMPLQVFDMAAPKALKRIVTGERVGTIVGANHDQ</sequence>
<proteinExistence type="inferred from homology"/>
<reference key="1">
    <citation type="journal article" date="2004" name="Nat. Genet.">
        <title>Evidence in the Legionella pneumophila genome for exploitation of host cell functions and high genome plasticity.</title>
        <authorList>
            <person name="Cazalet C."/>
            <person name="Rusniok C."/>
            <person name="Brueggemann H."/>
            <person name="Zidane N."/>
            <person name="Magnier A."/>
            <person name="Ma L."/>
            <person name="Tichit M."/>
            <person name="Jarraud S."/>
            <person name="Bouchier C."/>
            <person name="Vandenesch F."/>
            <person name="Kunst F."/>
            <person name="Etienne J."/>
            <person name="Glaser P."/>
            <person name="Buchrieser C."/>
        </authorList>
    </citation>
    <scope>NUCLEOTIDE SEQUENCE [LARGE SCALE GENOMIC DNA]</scope>
    <source>
        <strain>Lens</strain>
    </source>
</reference>